<feature type="chain" id="PRO_0000342120" description="Putative makorin-5">
    <location>
        <begin position="1"/>
        <end position="33"/>
    </location>
</feature>
<sequence>MLLAAVGDDELTDSEDESDLFHEELEDFYDLDL</sequence>
<protein>
    <recommendedName>
        <fullName>Putative makorin-5</fullName>
    </recommendedName>
    <alternativeName>
        <fullName>Makorin ring finger protein pseudogene 6</fullName>
    </alternativeName>
    <alternativeName>
        <fullName>Makorin ring finger protein pseudogene 9</fullName>
    </alternativeName>
    <alternativeName>
        <fullName>Putative RING finger protein 65</fullName>
    </alternativeName>
</protein>
<comment type="caution">
    <text evidence="1">Could be the product of a pseudogene.</text>
</comment>
<evidence type="ECO:0000305" key="1"/>
<organism>
    <name type="scientific">Homo sapiens</name>
    <name type="common">Human</name>
    <dbReference type="NCBI Taxonomy" id="9606"/>
    <lineage>
        <taxon>Eukaryota</taxon>
        <taxon>Metazoa</taxon>
        <taxon>Chordata</taxon>
        <taxon>Craniata</taxon>
        <taxon>Vertebrata</taxon>
        <taxon>Euteleostomi</taxon>
        <taxon>Mammalia</taxon>
        <taxon>Eutheria</taxon>
        <taxon>Euarchontoglires</taxon>
        <taxon>Primates</taxon>
        <taxon>Haplorrhini</taxon>
        <taxon>Catarrhini</taxon>
        <taxon>Hominidae</taxon>
        <taxon>Homo</taxon>
    </lineage>
</organism>
<name>MKRN5_HUMAN</name>
<proteinExistence type="uncertain"/>
<reference key="1">
    <citation type="journal article" date="2004" name="Genome Res.">
        <title>The status, quality, and expansion of the NIH full-length cDNA project: the Mammalian Gene Collection (MGC).</title>
        <authorList>
            <consortium name="The MGC Project Team"/>
        </authorList>
    </citation>
    <scope>NUCLEOTIDE SEQUENCE [LARGE SCALE MRNA]</scope>
    <source>
        <tissue>Brain</tissue>
    </source>
</reference>
<gene>
    <name type="primary">MKRN9P</name>
    <name type="synonym">MKRN5</name>
    <name type="synonym">MKRN9</name>
    <name type="synonym">MKRNP6</name>
    <name type="synonym">RNF65</name>
    <name type="synonym">ZNF127L3</name>
</gene>
<keyword id="KW-1185">Reference proteome</keyword>
<dbReference type="EMBL" id="BC067894">
    <property type="status" value="NOT_ANNOTATED_CDS"/>
    <property type="molecule type" value="mRNA"/>
</dbReference>
<dbReference type="BioMuta" id="HGNC:7116"/>
<dbReference type="AGR" id="HGNC:7116"/>
<dbReference type="GeneCards" id="MKRN9P"/>
<dbReference type="HGNC" id="HGNC:7116">
    <property type="gene designation" value="MKRN9P"/>
</dbReference>
<dbReference type="neXtProt" id="NX_Q6NVV0"/>
<dbReference type="InParanoid" id="Q6NVV0"/>
<dbReference type="PAN-GO" id="Q6NVV0">
    <property type="GO annotations" value="0 GO annotations based on evolutionary models"/>
</dbReference>
<dbReference type="SignaLink" id="Q6NVV0"/>
<dbReference type="Pharos" id="Q6NVV0">
    <property type="development level" value="Tdark"/>
</dbReference>
<dbReference type="Proteomes" id="UP000005640">
    <property type="component" value="Unplaced"/>
</dbReference>
<dbReference type="InterPro" id="IPR031644">
    <property type="entry name" value="MKRN1_C"/>
</dbReference>
<dbReference type="Pfam" id="PF15815">
    <property type="entry name" value="MKRN1_C"/>
    <property type="match status" value="1"/>
</dbReference>
<accession>Q6NVV0</accession>